<proteinExistence type="inferred from homology"/>
<dbReference type="EC" id="3.6.1.1" evidence="1"/>
<dbReference type="EMBL" id="AE016823">
    <property type="protein sequence ID" value="AAS71768.1"/>
    <property type="molecule type" value="Genomic_DNA"/>
</dbReference>
<dbReference type="RefSeq" id="WP_000233562.1">
    <property type="nucleotide sequence ID" value="NC_005823.1"/>
</dbReference>
<dbReference type="SMR" id="Q72MG4"/>
<dbReference type="KEGG" id="lic:LIC_13223"/>
<dbReference type="HOGENOM" id="CLU_073198_1_2_12"/>
<dbReference type="Proteomes" id="UP000007037">
    <property type="component" value="Chromosome I"/>
</dbReference>
<dbReference type="GO" id="GO:0005737">
    <property type="term" value="C:cytoplasm"/>
    <property type="evidence" value="ECO:0007669"/>
    <property type="project" value="UniProtKB-SubCell"/>
</dbReference>
<dbReference type="GO" id="GO:0004427">
    <property type="term" value="F:inorganic diphosphate phosphatase activity"/>
    <property type="evidence" value="ECO:0007669"/>
    <property type="project" value="UniProtKB-UniRule"/>
</dbReference>
<dbReference type="GO" id="GO:0000287">
    <property type="term" value="F:magnesium ion binding"/>
    <property type="evidence" value="ECO:0007669"/>
    <property type="project" value="UniProtKB-UniRule"/>
</dbReference>
<dbReference type="GO" id="GO:0006796">
    <property type="term" value="P:phosphate-containing compound metabolic process"/>
    <property type="evidence" value="ECO:0007669"/>
    <property type="project" value="InterPro"/>
</dbReference>
<dbReference type="CDD" id="cd00412">
    <property type="entry name" value="pyrophosphatase"/>
    <property type="match status" value="1"/>
</dbReference>
<dbReference type="FunFam" id="3.90.80.10:FF:000003">
    <property type="entry name" value="Inorganic pyrophosphatase"/>
    <property type="match status" value="1"/>
</dbReference>
<dbReference type="Gene3D" id="3.90.80.10">
    <property type="entry name" value="Inorganic pyrophosphatase"/>
    <property type="match status" value="1"/>
</dbReference>
<dbReference type="HAMAP" id="MF_00209">
    <property type="entry name" value="Inorganic_PPase"/>
    <property type="match status" value="1"/>
</dbReference>
<dbReference type="InterPro" id="IPR008162">
    <property type="entry name" value="Pyrophosphatase"/>
</dbReference>
<dbReference type="InterPro" id="IPR036649">
    <property type="entry name" value="Pyrophosphatase_sf"/>
</dbReference>
<dbReference type="PANTHER" id="PTHR10286">
    <property type="entry name" value="INORGANIC PYROPHOSPHATASE"/>
    <property type="match status" value="1"/>
</dbReference>
<dbReference type="Pfam" id="PF00719">
    <property type="entry name" value="Pyrophosphatase"/>
    <property type="match status" value="1"/>
</dbReference>
<dbReference type="SUPFAM" id="SSF50324">
    <property type="entry name" value="Inorganic pyrophosphatase"/>
    <property type="match status" value="1"/>
</dbReference>
<comment type="function">
    <text evidence="1">Catalyzes the hydrolysis of inorganic pyrophosphate (PPi) forming two phosphate ions.</text>
</comment>
<comment type="catalytic activity">
    <reaction evidence="1">
        <text>diphosphate + H2O = 2 phosphate + H(+)</text>
        <dbReference type="Rhea" id="RHEA:24576"/>
        <dbReference type="ChEBI" id="CHEBI:15377"/>
        <dbReference type="ChEBI" id="CHEBI:15378"/>
        <dbReference type="ChEBI" id="CHEBI:33019"/>
        <dbReference type="ChEBI" id="CHEBI:43474"/>
        <dbReference type="EC" id="3.6.1.1"/>
    </reaction>
</comment>
<comment type="cofactor">
    <cofactor evidence="1">
        <name>Mg(2+)</name>
        <dbReference type="ChEBI" id="CHEBI:18420"/>
    </cofactor>
</comment>
<comment type="subunit">
    <text evidence="1">Homohexamer.</text>
</comment>
<comment type="subcellular location">
    <subcellularLocation>
        <location evidence="1">Cytoplasm</location>
    </subcellularLocation>
</comment>
<comment type="similarity">
    <text evidence="1">Belongs to the PPase family.</text>
</comment>
<sequence length="178" mass="20445">MVHPWHDISPGDQNPEIVNGVIEIKRGSRAKYEVDKEYGILKLDRVLYSSFYYPANYGFIPQSYCGDQDPLDILVLSQVELEPLCLVKAKVIGVMRMLDSGEEDDKIIAVAANDMSVNHINDISELPPHFTLELKHFFEDYKKLENKTVVIEEFQNAILARKIVLDSLELYKKTFPKK</sequence>
<keyword id="KW-0963">Cytoplasm</keyword>
<keyword id="KW-0378">Hydrolase</keyword>
<keyword id="KW-0460">Magnesium</keyword>
<keyword id="KW-0479">Metal-binding</keyword>
<protein>
    <recommendedName>
        <fullName evidence="1">Inorganic pyrophosphatase</fullName>
        <ecNumber evidence="1">3.6.1.1</ecNumber>
    </recommendedName>
    <alternativeName>
        <fullName evidence="1">Pyrophosphate phospho-hydrolase</fullName>
        <shortName evidence="1">PPase</shortName>
    </alternativeName>
</protein>
<feature type="chain" id="PRO_0000137505" description="Inorganic pyrophosphatase">
    <location>
        <begin position="1"/>
        <end position="178"/>
    </location>
</feature>
<feature type="binding site" evidence="1">
    <location>
        <position position="31"/>
    </location>
    <ligand>
        <name>substrate</name>
    </ligand>
</feature>
<feature type="binding site" evidence="1">
    <location>
        <position position="45"/>
    </location>
    <ligand>
        <name>substrate</name>
    </ligand>
</feature>
<feature type="binding site" evidence="1">
    <location>
        <position position="57"/>
    </location>
    <ligand>
        <name>substrate</name>
    </ligand>
</feature>
<feature type="binding site" evidence="1">
    <location>
        <position position="67"/>
    </location>
    <ligand>
        <name>Mg(2+)</name>
        <dbReference type="ChEBI" id="CHEBI:18420"/>
        <label>1</label>
    </ligand>
</feature>
<feature type="binding site" evidence="1">
    <location>
        <position position="72"/>
    </location>
    <ligand>
        <name>Mg(2+)</name>
        <dbReference type="ChEBI" id="CHEBI:18420"/>
        <label>1</label>
    </ligand>
</feature>
<feature type="binding site" evidence="1">
    <location>
        <position position="72"/>
    </location>
    <ligand>
        <name>Mg(2+)</name>
        <dbReference type="ChEBI" id="CHEBI:18420"/>
        <label>2</label>
    </ligand>
</feature>
<feature type="binding site" evidence="1">
    <location>
        <position position="104"/>
    </location>
    <ligand>
        <name>Mg(2+)</name>
        <dbReference type="ChEBI" id="CHEBI:18420"/>
        <label>1</label>
    </ligand>
</feature>
<feature type="binding site" evidence="1">
    <location>
        <position position="141"/>
    </location>
    <ligand>
        <name>substrate</name>
    </ligand>
</feature>
<evidence type="ECO:0000255" key="1">
    <source>
        <dbReference type="HAMAP-Rule" id="MF_00209"/>
    </source>
</evidence>
<organism>
    <name type="scientific">Leptospira interrogans serogroup Icterohaemorrhagiae serovar copenhageni (strain Fiocruz L1-130)</name>
    <dbReference type="NCBI Taxonomy" id="267671"/>
    <lineage>
        <taxon>Bacteria</taxon>
        <taxon>Pseudomonadati</taxon>
        <taxon>Spirochaetota</taxon>
        <taxon>Spirochaetia</taxon>
        <taxon>Leptospirales</taxon>
        <taxon>Leptospiraceae</taxon>
        <taxon>Leptospira</taxon>
    </lineage>
</organism>
<name>IPYR_LEPIC</name>
<accession>Q72MG4</accession>
<reference key="1">
    <citation type="journal article" date="2004" name="J. Bacteriol.">
        <title>Comparative genomics of two Leptospira interrogans serovars reveals novel insights into physiology and pathogenesis.</title>
        <authorList>
            <person name="Nascimento A.L.T.O."/>
            <person name="Ko A.I."/>
            <person name="Martins E.A.L."/>
            <person name="Monteiro-Vitorello C.B."/>
            <person name="Ho P.L."/>
            <person name="Haake D.A."/>
            <person name="Verjovski-Almeida S."/>
            <person name="Hartskeerl R.A."/>
            <person name="Marques M.V."/>
            <person name="Oliveira M.C."/>
            <person name="Menck C.F.M."/>
            <person name="Leite L.C.C."/>
            <person name="Carrer H."/>
            <person name="Coutinho L.L."/>
            <person name="Degrave W.M."/>
            <person name="Dellagostin O.A."/>
            <person name="El-Dorry H."/>
            <person name="Ferro E.S."/>
            <person name="Ferro M.I.T."/>
            <person name="Furlan L.R."/>
            <person name="Gamberini M."/>
            <person name="Giglioti E.A."/>
            <person name="Goes-Neto A."/>
            <person name="Goldman G.H."/>
            <person name="Goldman M.H.S."/>
            <person name="Harakava R."/>
            <person name="Jeronimo S.M.B."/>
            <person name="Junqueira-de-Azevedo I.L.M."/>
            <person name="Kimura E.T."/>
            <person name="Kuramae E.E."/>
            <person name="Lemos E.G.M."/>
            <person name="Lemos M.V.F."/>
            <person name="Marino C.L."/>
            <person name="Nunes L.R."/>
            <person name="de Oliveira R.C."/>
            <person name="Pereira G.G."/>
            <person name="Reis M.S."/>
            <person name="Schriefer A."/>
            <person name="Siqueira W.J."/>
            <person name="Sommer P."/>
            <person name="Tsai S.M."/>
            <person name="Simpson A.J.G."/>
            <person name="Ferro J.A."/>
            <person name="Camargo L.E.A."/>
            <person name="Kitajima J.P."/>
            <person name="Setubal J.C."/>
            <person name="Van Sluys M.A."/>
        </authorList>
    </citation>
    <scope>NUCLEOTIDE SEQUENCE [LARGE SCALE GENOMIC DNA]</scope>
    <source>
        <strain>Fiocruz L1-130</strain>
    </source>
</reference>
<gene>
    <name evidence="1" type="primary">ppa</name>
    <name type="ordered locus">LIC_13223</name>
</gene>